<reference key="1">
    <citation type="journal article" date="2010" name="J. Bacteriol.">
        <title>Genome sequence of the deep-rooted Yersinia pestis strain Angola reveals new insights into the evolution and pangenome of the plague bacterium.</title>
        <authorList>
            <person name="Eppinger M."/>
            <person name="Worsham P.L."/>
            <person name="Nikolich M.P."/>
            <person name="Riley D.R."/>
            <person name="Sebastian Y."/>
            <person name="Mou S."/>
            <person name="Achtman M."/>
            <person name="Lindler L.E."/>
            <person name="Ravel J."/>
        </authorList>
    </citation>
    <scope>NUCLEOTIDE SEQUENCE [LARGE SCALE GENOMIC DNA]</scope>
    <source>
        <strain>Angola</strain>
    </source>
</reference>
<proteinExistence type="inferred from homology"/>
<feature type="chain" id="PRO_1000097469" description="DNA-binding protein Fis">
    <location>
        <begin position="1"/>
        <end position="98"/>
    </location>
</feature>
<feature type="DNA-binding region" description="H-T-H motif" evidence="1">
    <location>
        <begin position="74"/>
        <end position="93"/>
    </location>
</feature>
<organism>
    <name type="scientific">Yersinia pestis bv. Antiqua (strain Angola)</name>
    <dbReference type="NCBI Taxonomy" id="349746"/>
    <lineage>
        <taxon>Bacteria</taxon>
        <taxon>Pseudomonadati</taxon>
        <taxon>Pseudomonadota</taxon>
        <taxon>Gammaproteobacteria</taxon>
        <taxon>Enterobacterales</taxon>
        <taxon>Yersiniaceae</taxon>
        <taxon>Yersinia</taxon>
    </lineage>
</organism>
<name>FIS_YERPG</name>
<gene>
    <name evidence="1" type="primary">fis</name>
    <name type="ordered locus">YpAngola_A1212</name>
</gene>
<comment type="function">
    <text evidence="1">Activates ribosomal RNA transcription. Plays a direct role in upstream activation of rRNA promoters.</text>
</comment>
<comment type="subunit">
    <text evidence="1">Homodimer.</text>
</comment>
<comment type="similarity">
    <text evidence="1">Belongs to the transcriptional regulatory Fis family.</text>
</comment>
<protein>
    <recommendedName>
        <fullName evidence="1">DNA-binding protein Fis</fullName>
    </recommendedName>
</protein>
<keyword id="KW-0010">Activator</keyword>
<keyword id="KW-0238">DNA-binding</keyword>
<keyword id="KW-0804">Transcription</keyword>
<keyword id="KW-0805">Transcription regulation</keyword>
<accession>A9R1Z3</accession>
<sequence length="98" mass="11197">MFEQRVNSDVLTVATVNSQDQVTQKPLRDSVKQALKNYFAQLNGQDVSDLYELVLAEVEQPLLDMVMQYTRGNQTRAALMMGINRGTLRKKLKKYGMN</sequence>
<evidence type="ECO:0000255" key="1">
    <source>
        <dbReference type="HAMAP-Rule" id="MF_00166"/>
    </source>
</evidence>
<dbReference type="EMBL" id="CP000901">
    <property type="protein sequence ID" value="ABX88240.1"/>
    <property type="molecule type" value="Genomic_DNA"/>
</dbReference>
<dbReference type="RefSeq" id="WP_002210061.1">
    <property type="nucleotide sequence ID" value="NZ_CP009935.1"/>
</dbReference>
<dbReference type="SMR" id="A9R1Z3"/>
<dbReference type="GeneID" id="97454355"/>
<dbReference type="KEGG" id="ypg:YpAngola_A1212"/>
<dbReference type="PATRIC" id="fig|349746.12.peg.2167"/>
<dbReference type="GO" id="GO:0003700">
    <property type="term" value="F:DNA-binding transcription factor activity"/>
    <property type="evidence" value="ECO:0007669"/>
    <property type="project" value="UniProtKB-UniRule"/>
</dbReference>
<dbReference type="GO" id="GO:0043565">
    <property type="term" value="F:sequence-specific DNA binding"/>
    <property type="evidence" value="ECO:0007669"/>
    <property type="project" value="InterPro"/>
</dbReference>
<dbReference type="FunFam" id="1.10.10.60:FF:000006">
    <property type="entry name" value="DNA-binding protein Fis"/>
    <property type="match status" value="1"/>
</dbReference>
<dbReference type="Gene3D" id="1.10.10.60">
    <property type="entry name" value="Homeodomain-like"/>
    <property type="match status" value="1"/>
</dbReference>
<dbReference type="HAMAP" id="MF_00166">
    <property type="entry name" value="DNA_binding_Fis"/>
    <property type="match status" value="1"/>
</dbReference>
<dbReference type="InterPro" id="IPR005412">
    <property type="entry name" value="Fis_DNA-bd"/>
</dbReference>
<dbReference type="InterPro" id="IPR009057">
    <property type="entry name" value="Homeodomain-like_sf"/>
</dbReference>
<dbReference type="InterPro" id="IPR002197">
    <property type="entry name" value="HTH_Fis"/>
</dbReference>
<dbReference type="InterPro" id="IPR050207">
    <property type="entry name" value="Trans_regulatory_Fis"/>
</dbReference>
<dbReference type="NCBIfam" id="NF001659">
    <property type="entry name" value="PRK00430.1"/>
    <property type="match status" value="1"/>
</dbReference>
<dbReference type="PANTHER" id="PTHR47918">
    <property type="entry name" value="DNA-BINDING PROTEIN FIS"/>
    <property type="match status" value="1"/>
</dbReference>
<dbReference type="PANTHER" id="PTHR47918:SF1">
    <property type="entry name" value="DNA-BINDING PROTEIN FIS"/>
    <property type="match status" value="1"/>
</dbReference>
<dbReference type="Pfam" id="PF02954">
    <property type="entry name" value="HTH_8"/>
    <property type="match status" value="1"/>
</dbReference>
<dbReference type="PIRSF" id="PIRSF002097">
    <property type="entry name" value="DNA-binding_Fis"/>
    <property type="match status" value="1"/>
</dbReference>
<dbReference type="PRINTS" id="PR01591">
    <property type="entry name" value="DNABINDNGFIS"/>
</dbReference>
<dbReference type="PRINTS" id="PR01590">
    <property type="entry name" value="HTHFIS"/>
</dbReference>
<dbReference type="SUPFAM" id="SSF46689">
    <property type="entry name" value="Homeodomain-like"/>
    <property type="match status" value="1"/>
</dbReference>